<protein>
    <recommendedName>
        <fullName evidence="11">Long-chain fatty acid transport protein 1</fullName>
    </recommendedName>
    <alternativeName>
        <fullName>Arachidonate--CoA ligase</fullName>
        <ecNumber evidence="1">6.2.1.15</ecNumber>
    </alternativeName>
    <alternativeName>
        <fullName evidence="9">Fatty acid transport protein 1</fullName>
        <shortName evidence="9">FATP-1</shortName>
    </alternativeName>
    <alternativeName>
        <fullName>Long-chain-fatty-acid--CoA ligase</fullName>
        <ecNumber evidence="1">6.2.1.3</ecNumber>
    </alternativeName>
    <alternativeName>
        <fullName evidence="12">Solute carrier family 27 member 1</fullName>
    </alternativeName>
    <alternativeName>
        <fullName>Very long-chain acyl-CoA synthetase</fullName>
        <ecNumber evidence="1">6.2.1.-</ecNumber>
    </alternativeName>
</protein>
<comment type="function">
    <text evidence="1 4 5 6 7">Mediates the import of long-chain fatty acids (LCFA) into the cell by facilitating their transport at the plasma membrane (PubMed:12556534, PubMed:20530735, PubMed:21395585, PubMed:28178239). Also functions as an acyl-CoA ligase catalyzing the ATP-dependent formation of fatty acyl-CoA using LCFA and very-long-chain fatty acids (VLCFA) as substrates, which prevents fatty acid efflux from cells and might drive more fatty acid uptake. May act directly as a bona fide transporter, or alternatively, in a cytoplasmic or membrane-associated multimeric protein complex to trap and draw fatty acids towards accumulation. Plays a pivotal role in regulating available LCFA substrates from exogenous sources in tissues undergoing high levels of beta-oxidation or triglyceride synthesis. May be involved in regulation of cholesterol metabolism (By similarity). Probably involved in fatty acid transport across the blood barrier (PubMed:21395585).</text>
</comment>
<comment type="catalytic activity">
    <reaction evidence="4 5 6">
        <text>a fatty acid(in) = a fatty acid(out)</text>
        <dbReference type="Rhea" id="RHEA:38879"/>
        <dbReference type="ChEBI" id="CHEBI:28868"/>
    </reaction>
</comment>
<comment type="catalytic activity">
    <reaction evidence="4 6">
        <text>(9Z)-octadecenoate(out) = (9Z)-octadecenoate(in)</text>
        <dbReference type="Rhea" id="RHEA:33655"/>
        <dbReference type="ChEBI" id="CHEBI:30823"/>
    </reaction>
</comment>
<comment type="catalytic activity">
    <reaction evidence="4 6">
        <text>hexadecanoate(out) = hexadecanoate(in)</text>
        <dbReference type="Rhea" id="RHEA:45256"/>
        <dbReference type="ChEBI" id="CHEBI:7896"/>
    </reaction>
</comment>
<comment type="catalytic activity">
    <reaction evidence="4">
        <text>(9Z,12Z)-octadecadienoate(out) = (9Z,12Z)-octadecadienoate(in)</text>
        <dbReference type="Rhea" id="RHEA:45264"/>
        <dbReference type="ChEBI" id="CHEBI:30245"/>
    </reaction>
</comment>
<comment type="catalytic activity">
    <reaction evidence="1">
        <text>(5Z,8Z,11Z,14Z)-eicosatetraenoate(out) = (5Z,8Z,11Z,14Z)-eicosatetraenoate(in)</text>
        <dbReference type="Rhea" id="RHEA:71395"/>
        <dbReference type="ChEBI" id="CHEBI:32395"/>
    </reaction>
</comment>
<comment type="catalytic activity">
    <reaction evidence="1">
        <text>a long-chain fatty acid + ATP + CoA = a long-chain fatty acyl-CoA + AMP + diphosphate</text>
        <dbReference type="Rhea" id="RHEA:15421"/>
        <dbReference type="ChEBI" id="CHEBI:30616"/>
        <dbReference type="ChEBI" id="CHEBI:33019"/>
        <dbReference type="ChEBI" id="CHEBI:57287"/>
        <dbReference type="ChEBI" id="CHEBI:57560"/>
        <dbReference type="ChEBI" id="CHEBI:83139"/>
        <dbReference type="ChEBI" id="CHEBI:456215"/>
        <dbReference type="EC" id="6.2.1.3"/>
    </reaction>
    <physiologicalReaction direction="left-to-right" evidence="1">
        <dbReference type="Rhea" id="RHEA:15422"/>
    </physiologicalReaction>
</comment>
<comment type="catalytic activity">
    <reaction evidence="1">
        <text>(5Z,8Z,11Z,14Z)-eicosatetraenoate + ATP + CoA = (5Z,8Z,11Z,14Z)-eicosatetraenoyl-CoA + AMP + diphosphate</text>
        <dbReference type="Rhea" id="RHEA:19713"/>
        <dbReference type="ChEBI" id="CHEBI:30616"/>
        <dbReference type="ChEBI" id="CHEBI:32395"/>
        <dbReference type="ChEBI" id="CHEBI:33019"/>
        <dbReference type="ChEBI" id="CHEBI:57287"/>
        <dbReference type="ChEBI" id="CHEBI:57368"/>
        <dbReference type="ChEBI" id="CHEBI:456215"/>
        <dbReference type="EC" id="6.2.1.15"/>
    </reaction>
    <physiologicalReaction direction="left-to-right" evidence="1">
        <dbReference type="Rhea" id="RHEA:19714"/>
    </physiologicalReaction>
</comment>
<comment type="catalytic activity">
    <reaction evidence="1">
        <text>a very long-chain fatty acid + ATP + CoA = a very long-chain fatty acyl-CoA + AMP + diphosphate</text>
        <dbReference type="Rhea" id="RHEA:54536"/>
        <dbReference type="ChEBI" id="CHEBI:30616"/>
        <dbReference type="ChEBI" id="CHEBI:33019"/>
        <dbReference type="ChEBI" id="CHEBI:57287"/>
        <dbReference type="ChEBI" id="CHEBI:58950"/>
        <dbReference type="ChEBI" id="CHEBI:138261"/>
        <dbReference type="ChEBI" id="CHEBI:456215"/>
    </reaction>
    <physiologicalReaction direction="left-to-right" evidence="1">
        <dbReference type="Rhea" id="RHEA:54537"/>
    </physiologicalReaction>
</comment>
<comment type="catalytic activity">
    <reaction evidence="1">
        <text>tetracosanoate + ATP + CoA = tetracosanoyl-CoA + AMP + diphosphate</text>
        <dbReference type="Rhea" id="RHEA:33639"/>
        <dbReference type="ChEBI" id="CHEBI:30616"/>
        <dbReference type="ChEBI" id="CHEBI:31014"/>
        <dbReference type="ChEBI" id="CHEBI:33019"/>
        <dbReference type="ChEBI" id="CHEBI:57287"/>
        <dbReference type="ChEBI" id="CHEBI:65052"/>
        <dbReference type="ChEBI" id="CHEBI:456215"/>
    </reaction>
    <physiologicalReaction direction="left-to-right" evidence="1">
        <dbReference type="Rhea" id="RHEA:33640"/>
    </physiologicalReaction>
</comment>
<comment type="activity regulation">
    <text evidence="1">Inhibited by Triacsin C.</text>
</comment>
<comment type="subunit">
    <text evidence="1 7 8">Self-associates. May function as a homodimer (By similarity). Interacts with EPRS1; mediates the translocation of SLC27A1 from the cytoplasm to the plasma membrane thereby increasing the uptake of long-chain fatty acids (PubMed:28178239). Interacts with DGAT2 and this interaction is enhanced in the presence of ZFYVE1 (PubMed:28178239).</text>
</comment>
<comment type="subcellular location">
    <subcellularLocation>
        <location evidence="1">Cell membrane</location>
        <topology evidence="1">Single-pass membrane protein</topology>
    </subcellularLocation>
    <subcellularLocation>
        <location evidence="1">Endomembrane system</location>
        <topology evidence="1">Single-pass membrane protein</topology>
    </subcellularLocation>
    <subcellularLocation>
        <location evidence="1">Cytoplasm</location>
    </subcellularLocation>
    <text evidence="1">Plasma membrane and intracellular membranes, at least in adipocytes. In adipocytes, but not myocytes, insulin via the mTORC1 signaling pathway induces a rapid translocation of SLC27A1 from intracellular compartments to the plasma membrane, paralleled by increased LCFA uptake. Insulin-dependent translocation from the cytoplasm to the cell membrane is regulated by EPRS1. Predominantly cytoplasmic in myocytes.</text>
</comment>
<comment type="alternative products">
    <event type="alternative splicing"/>
    <isoform>
        <id>Q6PCB7-1</id>
        <name>1</name>
        <sequence type="displayed"/>
    </isoform>
    <isoform>
        <id>Q6PCB7-2</id>
        <name>2</name>
        <sequence type="described" ref="VSP_055806 VSP_055807"/>
    </isoform>
</comment>
<comment type="tissue specificity">
    <text evidence="3 6">Highest levels of expression are detected in muscle and adipose tissue small, intermediate levels in small intestine, and barely detectable in liver (PubMed:10873384, PubMed:21395585). Expressed in brain gray matter (PubMed:21395585).</text>
</comment>
<comment type="similarity">
    <text evidence="11">Belongs to the ATP-dependent AMP-binding enzyme family.</text>
</comment>
<name>S27A1_HUMAN</name>
<gene>
    <name evidence="12" type="primary">SLC27A1</name>
    <name type="synonym">ACSVL5</name>
    <name type="synonym">FATP1</name>
</gene>
<proteinExistence type="evidence at protein level"/>
<dbReference type="EC" id="6.2.1.15" evidence="1"/>
<dbReference type="EC" id="6.2.1.3" evidence="1"/>
<dbReference type="EC" id="6.2.1.-" evidence="1"/>
<dbReference type="EMBL" id="AK299852">
    <property type="protein sequence ID" value="BAH13148.1"/>
    <property type="molecule type" value="mRNA"/>
</dbReference>
<dbReference type="EMBL" id="AC010319">
    <property type="status" value="NOT_ANNOTATED_CDS"/>
    <property type="molecule type" value="Genomic_DNA"/>
</dbReference>
<dbReference type="EMBL" id="AC010618">
    <property type="status" value="NOT_ANNOTATED_CDS"/>
    <property type="molecule type" value="Genomic_DNA"/>
</dbReference>
<dbReference type="EMBL" id="CH471106">
    <property type="protein sequence ID" value="EAW84611.1"/>
    <property type="molecule type" value="Genomic_DNA"/>
</dbReference>
<dbReference type="EMBL" id="BC059399">
    <property type="protein sequence ID" value="AAH59399.1"/>
    <property type="molecule type" value="mRNA"/>
</dbReference>
<dbReference type="CCDS" id="CCDS32953.1">
    <molecule id="Q6PCB7-1"/>
</dbReference>
<dbReference type="RefSeq" id="NP_940982.1">
    <molecule id="Q6PCB7-1"/>
    <property type="nucleotide sequence ID" value="NM_198580.3"/>
</dbReference>
<dbReference type="RefSeq" id="XP_011526305.1">
    <molecule id="Q6PCB7-1"/>
    <property type="nucleotide sequence ID" value="XM_011528003.3"/>
</dbReference>
<dbReference type="RefSeq" id="XP_047294745.1">
    <molecule id="Q6PCB7-1"/>
    <property type="nucleotide sequence ID" value="XM_047438789.1"/>
</dbReference>
<dbReference type="RefSeq" id="XP_047294746.1">
    <molecule id="Q6PCB7-1"/>
    <property type="nucleotide sequence ID" value="XM_047438790.1"/>
</dbReference>
<dbReference type="RefSeq" id="XP_054176912.1">
    <molecule id="Q6PCB7-1"/>
    <property type="nucleotide sequence ID" value="XM_054320937.1"/>
</dbReference>
<dbReference type="RefSeq" id="XP_054176913.1">
    <molecule id="Q6PCB7-1"/>
    <property type="nucleotide sequence ID" value="XM_054320938.1"/>
</dbReference>
<dbReference type="RefSeq" id="XP_054176914.1">
    <molecule id="Q6PCB7-1"/>
    <property type="nucleotide sequence ID" value="XM_054320939.1"/>
</dbReference>
<dbReference type="SMR" id="Q6PCB7"/>
<dbReference type="BioGRID" id="132009">
    <property type="interactions" value="56"/>
</dbReference>
<dbReference type="FunCoup" id="Q6PCB7">
    <property type="interactions" value="325"/>
</dbReference>
<dbReference type="IntAct" id="Q6PCB7">
    <property type="interactions" value="22"/>
</dbReference>
<dbReference type="MINT" id="Q6PCB7"/>
<dbReference type="STRING" id="9606.ENSP00000252595"/>
<dbReference type="BindingDB" id="Q6PCB7"/>
<dbReference type="ChEMBL" id="CHEMBL2052038"/>
<dbReference type="GuidetoPHARMACOLOGY" id="1108"/>
<dbReference type="SwissLipids" id="SLP:000000427"/>
<dbReference type="TCDB" id="4.C.1.1.9">
    <property type="family name" value="the fatty acid group translocation (fat) family"/>
</dbReference>
<dbReference type="iPTMnet" id="Q6PCB7"/>
<dbReference type="PhosphoSitePlus" id="Q6PCB7"/>
<dbReference type="SwissPalm" id="Q6PCB7"/>
<dbReference type="BioMuta" id="SLC27A1"/>
<dbReference type="DMDM" id="74749156"/>
<dbReference type="jPOST" id="Q6PCB7"/>
<dbReference type="MassIVE" id="Q6PCB7"/>
<dbReference type="PaxDb" id="9606-ENSP00000252595"/>
<dbReference type="PeptideAtlas" id="Q6PCB7"/>
<dbReference type="ProteomicsDB" id="67060">
    <molecule id="Q6PCB7-1"/>
</dbReference>
<dbReference type="Pumba" id="Q6PCB7"/>
<dbReference type="Antibodypedia" id="1644">
    <property type="antibodies" value="157 antibodies from 20 providers"/>
</dbReference>
<dbReference type="DNASU" id="376497"/>
<dbReference type="Ensembl" id="ENST00000252595.12">
    <molecule id="Q6PCB7-1"/>
    <property type="protein sequence ID" value="ENSP00000252595.6"/>
    <property type="gene ID" value="ENSG00000130304.17"/>
</dbReference>
<dbReference type="Ensembl" id="ENST00000598424.5">
    <molecule id="Q6PCB7-2"/>
    <property type="protein sequence ID" value="ENSP00000472313.1"/>
    <property type="gene ID" value="ENSG00000130304.17"/>
</dbReference>
<dbReference type="GeneID" id="376497"/>
<dbReference type="KEGG" id="hsa:376497"/>
<dbReference type="MANE-Select" id="ENST00000252595.12">
    <property type="protein sequence ID" value="ENSP00000252595.6"/>
    <property type="RefSeq nucleotide sequence ID" value="NM_198580.3"/>
    <property type="RefSeq protein sequence ID" value="NP_940982.1"/>
</dbReference>
<dbReference type="UCSC" id="uc002ngu.2">
    <molecule id="Q6PCB7-1"/>
    <property type="organism name" value="human"/>
</dbReference>
<dbReference type="AGR" id="HGNC:10995"/>
<dbReference type="CTD" id="376497"/>
<dbReference type="DisGeNET" id="376497"/>
<dbReference type="GeneCards" id="SLC27A1"/>
<dbReference type="HGNC" id="HGNC:10995">
    <property type="gene designation" value="SLC27A1"/>
</dbReference>
<dbReference type="HPA" id="ENSG00000130304">
    <property type="expression patterns" value="Low tissue specificity"/>
</dbReference>
<dbReference type="MIM" id="600691">
    <property type="type" value="gene"/>
</dbReference>
<dbReference type="neXtProt" id="NX_Q6PCB7"/>
<dbReference type="OpenTargets" id="ENSG00000130304"/>
<dbReference type="PharmGKB" id="PA35869"/>
<dbReference type="VEuPathDB" id="HostDB:ENSG00000130304"/>
<dbReference type="eggNOG" id="KOG1179">
    <property type="taxonomic scope" value="Eukaryota"/>
</dbReference>
<dbReference type="GeneTree" id="ENSGT00940000159323"/>
<dbReference type="HOGENOM" id="CLU_000022_46_2_1"/>
<dbReference type="InParanoid" id="Q6PCB7"/>
<dbReference type="OMA" id="HHGLIMR"/>
<dbReference type="OrthoDB" id="288590at2759"/>
<dbReference type="PAN-GO" id="Q6PCB7">
    <property type="GO annotations" value="19 GO annotations based on evolutionary models"/>
</dbReference>
<dbReference type="PhylomeDB" id="Q6PCB7"/>
<dbReference type="TreeFam" id="TF313430"/>
<dbReference type="PathwayCommons" id="Q6PCB7"/>
<dbReference type="Reactome" id="R-HSA-1989781">
    <property type="pathway name" value="PPARA activates gene expression"/>
</dbReference>
<dbReference type="Reactome" id="R-HSA-2142753">
    <property type="pathway name" value="Arachidonate metabolism"/>
</dbReference>
<dbReference type="Reactome" id="R-HSA-804914">
    <property type="pathway name" value="Transport of fatty acids"/>
</dbReference>
<dbReference type="SignaLink" id="Q6PCB7"/>
<dbReference type="SIGNOR" id="Q6PCB7"/>
<dbReference type="BioGRID-ORCS" id="376497">
    <property type="hits" value="12 hits in 1149 CRISPR screens"/>
</dbReference>
<dbReference type="CD-CODE" id="FB4E32DD">
    <property type="entry name" value="Presynaptic clusters and postsynaptic densities"/>
</dbReference>
<dbReference type="ChiTaRS" id="SLC27A1">
    <property type="organism name" value="human"/>
</dbReference>
<dbReference type="GeneWiki" id="SLC27A1"/>
<dbReference type="GenomeRNAi" id="376497"/>
<dbReference type="Pharos" id="Q6PCB7">
    <property type="development level" value="Tchem"/>
</dbReference>
<dbReference type="PRO" id="PR:Q6PCB7"/>
<dbReference type="Proteomes" id="UP000005640">
    <property type="component" value="Chromosome 19"/>
</dbReference>
<dbReference type="RNAct" id="Q6PCB7">
    <property type="molecule type" value="protein"/>
</dbReference>
<dbReference type="Bgee" id="ENSG00000130304">
    <property type="expression patterns" value="Expressed in apex of heart and 159 other cell types or tissues"/>
</dbReference>
<dbReference type="ExpressionAtlas" id="Q6PCB7">
    <property type="expression patterns" value="baseline and differential"/>
</dbReference>
<dbReference type="GO" id="GO:0009925">
    <property type="term" value="C:basal plasma membrane"/>
    <property type="evidence" value="ECO:0000250"/>
    <property type="project" value="ARUK-UCL"/>
</dbReference>
<dbReference type="GO" id="GO:0005783">
    <property type="term" value="C:endoplasmic reticulum"/>
    <property type="evidence" value="ECO:0000250"/>
    <property type="project" value="ARUK-UCL"/>
</dbReference>
<dbReference type="GO" id="GO:0005789">
    <property type="term" value="C:endoplasmic reticulum membrane"/>
    <property type="evidence" value="ECO:0000318"/>
    <property type="project" value="GO_Central"/>
</dbReference>
<dbReference type="GO" id="GO:0016020">
    <property type="term" value="C:membrane"/>
    <property type="evidence" value="ECO:0007005"/>
    <property type="project" value="UniProtKB"/>
</dbReference>
<dbReference type="GO" id="GO:0005886">
    <property type="term" value="C:plasma membrane"/>
    <property type="evidence" value="ECO:0000314"/>
    <property type="project" value="ARUK-UCL"/>
</dbReference>
<dbReference type="GO" id="GO:0047676">
    <property type="term" value="F:arachidonate-CoA ligase activity"/>
    <property type="evidence" value="ECO:0007669"/>
    <property type="project" value="UniProtKB-EC"/>
</dbReference>
<dbReference type="GO" id="GO:0015225">
    <property type="term" value="F:biotin transmembrane transporter activity"/>
    <property type="evidence" value="ECO:0000314"/>
    <property type="project" value="ARUK-UCL"/>
</dbReference>
<dbReference type="GO" id="GO:0015562">
    <property type="term" value="F:efflux transmembrane transporter activity"/>
    <property type="evidence" value="ECO:0000314"/>
    <property type="project" value="ARUK-UCL"/>
</dbReference>
<dbReference type="GO" id="GO:0015245">
    <property type="term" value="F:fatty acid transmembrane transporter activity"/>
    <property type="evidence" value="ECO:0000304"/>
    <property type="project" value="Reactome"/>
</dbReference>
<dbReference type="GO" id="GO:0042802">
    <property type="term" value="F:identical protein binding"/>
    <property type="evidence" value="ECO:0007669"/>
    <property type="project" value="Ensembl"/>
</dbReference>
<dbReference type="GO" id="GO:0005324">
    <property type="term" value="F:long-chain fatty acid transmembrane transporter activity"/>
    <property type="evidence" value="ECO:0000314"/>
    <property type="project" value="ARUK-UCL"/>
</dbReference>
<dbReference type="GO" id="GO:0004467">
    <property type="term" value="F:long-chain fatty acid-CoA ligase activity"/>
    <property type="evidence" value="ECO:0000250"/>
    <property type="project" value="UniProtKB"/>
</dbReference>
<dbReference type="GO" id="GO:0000166">
    <property type="term" value="F:nucleotide binding"/>
    <property type="evidence" value="ECO:0007669"/>
    <property type="project" value="UniProtKB-KW"/>
</dbReference>
<dbReference type="GO" id="GO:0090434">
    <property type="term" value="F:oleoyl-CoA ligase activity"/>
    <property type="evidence" value="ECO:0000250"/>
    <property type="project" value="ARUK-UCL"/>
</dbReference>
<dbReference type="GO" id="GO:0043539">
    <property type="term" value="F:protein serine/threonine kinase activator activity"/>
    <property type="evidence" value="ECO:0007669"/>
    <property type="project" value="Ensembl"/>
</dbReference>
<dbReference type="GO" id="GO:0031957">
    <property type="term" value="F:very long-chain fatty acid-CoA ligase activity"/>
    <property type="evidence" value="ECO:0007669"/>
    <property type="project" value="Ensembl"/>
</dbReference>
<dbReference type="GO" id="GO:0033211">
    <property type="term" value="P:adiponectin-activated signaling pathway"/>
    <property type="evidence" value="ECO:0007669"/>
    <property type="project" value="Ensembl"/>
</dbReference>
<dbReference type="GO" id="GO:1905135">
    <property type="term" value="P:biotin import across plasma membrane"/>
    <property type="evidence" value="ECO:0000314"/>
    <property type="project" value="ARUK-UCL"/>
</dbReference>
<dbReference type="GO" id="GO:0015878">
    <property type="term" value="P:biotin transport"/>
    <property type="evidence" value="ECO:0000314"/>
    <property type="project" value="ARUK-UCL"/>
</dbReference>
<dbReference type="GO" id="GO:0140115">
    <property type="term" value="P:export across plasma membrane"/>
    <property type="evidence" value="ECO:0000314"/>
    <property type="project" value="ARUK-UCL"/>
</dbReference>
<dbReference type="GO" id="GO:0044381">
    <property type="term" value="P:glucose import in response to insulin stimulus"/>
    <property type="evidence" value="ECO:0000250"/>
    <property type="project" value="ARUK-UCL"/>
</dbReference>
<dbReference type="GO" id="GO:1990379">
    <property type="term" value="P:lipid transport across blood-brain barrier"/>
    <property type="evidence" value="ECO:0000315"/>
    <property type="project" value="ARUK-UCL"/>
</dbReference>
<dbReference type="GO" id="GO:0015911">
    <property type="term" value="P:long-chain fatty acid import across plasma membrane"/>
    <property type="evidence" value="ECO:0000314"/>
    <property type="project" value="ARUK-UCL"/>
</dbReference>
<dbReference type="GO" id="GO:0044539">
    <property type="term" value="P:long-chain fatty acid import into cell"/>
    <property type="evidence" value="ECO:0000315"/>
    <property type="project" value="UniProtKB"/>
</dbReference>
<dbReference type="GO" id="GO:0001676">
    <property type="term" value="P:long-chain fatty acid metabolic process"/>
    <property type="evidence" value="ECO:0000318"/>
    <property type="project" value="GO_Central"/>
</dbReference>
<dbReference type="GO" id="GO:0015909">
    <property type="term" value="P:long-chain fatty acid transport"/>
    <property type="evidence" value="ECO:0000314"/>
    <property type="project" value="ARUK-UCL"/>
</dbReference>
<dbReference type="GO" id="GO:0001579">
    <property type="term" value="P:medium-chain fatty acid transport"/>
    <property type="evidence" value="ECO:0000318"/>
    <property type="project" value="GO_Central"/>
</dbReference>
<dbReference type="GO" id="GO:0031652">
    <property type="term" value="P:positive regulation of heat generation"/>
    <property type="evidence" value="ECO:0007669"/>
    <property type="project" value="Ensembl"/>
</dbReference>
<dbReference type="GO" id="GO:0010867">
    <property type="term" value="P:positive regulation of triglyceride biosynthetic process"/>
    <property type="evidence" value="ECO:0000250"/>
    <property type="project" value="UniProtKB"/>
</dbReference>
<dbReference type="GO" id="GO:0009409">
    <property type="term" value="P:response to cold"/>
    <property type="evidence" value="ECO:0007669"/>
    <property type="project" value="Ensembl"/>
</dbReference>
<dbReference type="GO" id="GO:0150104">
    <property type="term" value="P:transport across blood-brain barrier"/>
    <property type="evidence" value="ECO:0000303"/>
    <property type="project" value="ARUK-UCL"/>
</dbReference>
<dbReference type="FunFam" id="3.30.300.30:FF:000002">
    <property type="entry name" value="Long-chain fatty acid transport protein 1"/>
    <property type="match status" value="1"/>
</dbReference>
<dbReference type="FunFam" id="3.40.50.12780:FF:000008">
    <property type="entry name" value="Long-chain fatty acid transport protein 4"/>
    <property type="match status" value="1"/>
</dbReference>
<dbReference type="Gene3D" id="3.30.300.30">
    <property type="match status" value="1"/>
</dbReference>
<dbReference type="Gene3D" id="3.40.50.12780">
    <property type="entry name" value="N-terminal domain of ligase-like"/>
    <property type="match status" value="1"/>
</dbReference>
<dbReference type="InterPro" id="IPR025110">
    <property type="entry name" value="AMP-bd_C"/>
</dbReference>
<dbReference type="InterPro" id="IPR045851">
    <property type="entry name" value="AMP-bd_C_sf"/>
</dbReference>
<dbReference type="InterPro" id="IPR020845">
    <property type="entry name" value="AMP-binding_CS"/>
</dbReference>
<dbReference type="InterPro" id="IPR000873">
    <property type="entry name" value="AMP-dep_synth/lig_dom"/>
</dbReference>
<dbReference type="InterPro" id="IPR042099">
    <property type="entry name" value="ANL_N_sf"/>
</dbReference>
<dbReference type="NCBIfam" id="NF006134">
    <property type="entry name" value="PRK08279.1"/>
    <property type="match status" value="1"/>
</dbReference>
<dbReference type="PANTHER" id="PTHR43107">
    <property type="entry name" value="LONG-CHAIN FATTY ACID TRANSPORT PROTEIN"/>
    <property type="match status" value="1"/>
</dbReference>
<dbReference type="PANTHER" id="PTHR43107:SF7">
    <property type="entry name" value="LONG-CHAIN FATTY ACID TRANSPORT PROTEIN 1"/>
    <property type="match status" value="1"/>
</dbReference>
<dbReference type="Pfam" id="PF00501">
    <property type="entry name" value="AMP-binding"/>
    <property type="match status" value="1"/>
</dbReference>
<dbReference type="Pfam" id="PF13193">
    <property type="entry name" value="AMP-binding_C"/>
    <property type="match status" value="1"/>
</dbReference>
<dbReference type="SUPFAM" id="SSF56801">
    <property type="entry name" value="Acetyl-CoA synthetase-like"/>
    <property type="match status" value="1"/>
</dbReference>
<dbReference type="PROSITE" id="PS00455">
    <property type="entry name" value="AMP_BINDING"/>
    <property type="match status" value="1"/>
</dbReference>
<evidence type="ECO:0000250" key="1">
    <source>
        <dbReference type="UniProtKB" id="Q60714"/>
    </source>
</evidence>
<evidence type="ECO:0000255" key="2"/>
<evidence type="ECO:0000269" key="3">
    <source>
    </source>
</evidence>
<evidence type="ECO:0000269" key="4">
    <source>
    </source>
</evidence>
<evidence type="ECO:0000269" key="5">
    <source>
    </source>
</evidence>
<evidence type="ECO:0000269" key="6">
    <source>
    </source>
</evidence>
<evidence type="ECO:0000269" key="7">
    <source>
    </source>
</evidence>
<evidence type="ECO:0000269" key="8">
    <source>
    </source>
</evidence>
<evidence type="ECO:0000303" key="9">
    <source>
    </source>
</evidence>
<evidence type="ECO:0000303" key="10">
    <source>
    </source>
</evidence>
<evidence type="ECO:0000305" key="11"/>
<evidence type="ECO:0000312" key="12">
    <source>
        <dbReference type="HGNC" id="HGNC:10995"/>
    </source>
</evidence>
<organism>
    <name type="scientific">Homo sapiens</name>
    <name type="common">Human</name>
    <dbReference type="NCBI Taxonomy" id="9606"/>
    <lineage>
        <taxon>Eukaryota</taxon>
        <taxon>Metazoa</taxon>
        <taxon>Chordata</taxon>
        <taxon>Craniata</taxon>
        <taxon>Vertebrata</taxon>
        <taxon>Euteleostomi</taxon>
        <taxon>Mammalia</taxon>
        <taxon>Eutheria</taxon>
        <taxon>Euarchontoglires</taxon>
        <taxon>Primates</taxon>
        <taxon>Haplorrhini</taxon>
        <taxon>Catarrhini</taxon>
        <taxon>Hominidae</taxon>
        <taxon>Homo</taxon>
    </lineage>
</organism>
<reference key="1">
    <citation type="journal article" date="2004" name="Nat. Genet.">
        <title>Complete sequencing and characterization of 21,243 full-length human cDNAs.</title>
        <authorList>
            <person name="Ota T."/>
            <person name="Suzuki Y."/>
            <person name="Nishikawa T."/>
            <person name="Otsuki T."/>
            <person name="Sugiyama T."/>
            <person name="Irie R."/>
            <person name="Wakamatsu A."/>
            <person name="Hayashi K."/>
            <person name="Sato H."/>
            <person name="Nagai K."/>
            <person name="Kimura K."/>
            <person name="Makita H."/>
            <person name="Sekine M."/>
            <person name="Obayashi M."/>
            <person name="Nishi T."/>
            <person name="Shibahara T."/>
            <person name="Tanaka T."/>
            <person name="Ishii S."/>
            <person name="Yamamoto J."/>
            <person name="Saito K."/>
            <person name="Kawai Y."/>
            <person name="Isono Y."/>
            <person name="Nakamura Y."/>
            <person name="Nagahari K."/>
            <person name="Murakami K."/>
            <person name="Yasuda T."/>
            <person name="Iwayanagi T."/>
            <person name="Wagatsuma M."/>
            <person name="Shiratori A."/>
            <person name="Sudo H."/>
            <person name="Hosoiri T."/>
            <person name="Kaku Y."/>
            <person name="Kodaira H."/>
            <person name="Kondo H."/>
            <person name="Sugawara M."/>
            <person name="Takahashi M."/>
            <person name="Kanda K."/>
            <person name="Yokoi T."/>
            <person name="Furuya T."/>
            <person name="Kikkawa E."/>
            <person name="Omura Y."/>
            <person name="Abe K."/>
            <person name="Kamihara K."/>
            <person name="Katsuta N."/>
            <person name="Sato K."/>
            <person name="Tanikawa M."/>
            <person name="Yamazaki M."/>
            <person name="Ninomiya K."/>
            <person name="Ishibashi T."/>
            <person name="Yamashita H."/>
            <person name="Murakawa K."/>
            <person name="Fujimori K."/>
            <person name="Tanai H."/>
            <person name="Kimata M."/>
            <person name="Watanabe M."/>
            <person name="Hiraoka S."/>
            <person name="Chiba Y."/>
            <person name="Ishida S."/>
            <person name="Ono Y."/>
            <person name="Takiguchi S."/>
            <person name="Watanabe S."/>
            <person name="Yosida M."/>
            <person name="Hotuta T."/>
            <person name="Kusano J."/>
            <person name="Kanehori K."/>
            <person name="Takahashi-Fujii A."/>
            <person name="Hara H."/>
            <person name="Tanase T.-O."/>
            <person name="Nomura Y."/>
            <person name="Togiya S."/>
            <person name="Komai F."/>
            <person name="Hara R."/>
            <person name="Takeuchi K."/>
            <person name="Arita M."/>
            <person name="Imose N."/>
            <person name="Musashino K."/>
            <person name="Yuuki H."/>
            <person name="Oshima A."/>
            <person name="Sasaki N."/>
            <person name="Aotsuka S."/>
            <person name="Yoshikawa Y."/>
            <person name="Matsunawa H."/>
            <person name="Ichihara T."/>
            <person name="Shiohata N."/>
            <person name="Sano S."/>
            <person name="Moriya S."/>
            <person name="Momiyama H."/>
            <person name="Satoh N."/>
            <person name="Takami S."/>
            <person name="Terashima Y."/>
            <person name="Suzuki O."/>
            <person name="Nakagawa S."/>
            <person name="Senoh A."/>
            <person name="Mizoguchi H."/>
            <person name="Goto Y."/>
            <person name="Shimizu F."/>
            <person name="Wakebe H."/>
            <person name="Hishigaki H."/>
            <person name="Watanabe T."/>
            <person name="Sugiyama A."/>
            <person name="Takemoto M."/>
            <person name="Kawakami B."/>
            <person name="Yamazaki M."/>
            <person name="Watanabe K."/>
            <person name="Kumagai A."/>
            <person name="Itakura S."/>
            <person name="Fukuzumi Y."/>
            <person name="Fujimori Y."/>
            <person name="Komiyama M."/>
            <person name="Tashiro H."/>
            <person name="Tanigami A."/>
            <person name="Fujiwara T."/>
            <person name="Ono T."/>
            <person name="Yamada K."/>
            <person name="Fujii Y."/>
            <person name="Ozaki K."/>
            <person name="Hirao M."/>
            <person name="Ohmori Y."/>
            <person name="Kawabata A."/>
            <person name="Hikiji T."/>
            <person name="Kobatake N."/>
            <person name="Inagaki H."/>
            <person name="Ikema Y."/>
            <person name="Okamoto S."/>
            <person name="Okitani R."/>
            <person name="Kawakami T."/>
            <person name="Noguchi S."/>
            <person name="Itoh T."/>
            <person name="Shigeta K."/>
            <person name="Senba T."/>
            <person name="Matsumura K."/>
            <person name="Nakajima Y."/>
            <person name="Mizuno T."/>
            <person name="Morinaga M."/>
            <person name="Sasaki M."/>
            <person name="Togashi T."/>
            <person name="Oyama M."/>
            <person name="Hata H."/>
            <person name="Watanabe M."/>
            <person name="Komatsu T."/>
            <person name="Mizushima-Sugano J."/>
            <person name="Satoh T."/>
            <person name="Shirai Y."/>
            <person name="Takahashi Y."/>
            <person name="Nakagawa K."/>
            <person name="Okumura K."/>
            <person name="Nagase T."/>
            <person name="Nomura N."/>
            <person name="Kikuchi H."/>
            <person name="Masuho Y."/>
            <person name="Yamashita R."/>
            <person name="Nakai K."/>
            <person name="Yada T."/>
            <person name="Nakamura Y."/>
            <person name="Ohara O."/>
            <person name="Isogai T."/>
            <person name="Sugano S."/>
        </authorList>
    </citation>
    <scope>NUCLEOTIDE SEQUENCE [LARGE SCALE MRNA] (ISOFORM 2)</scope>
    <source>
        <tissue>Brain</tissue>
    </source>
</reference>
<reference key="2">
    <citation type="journal article" date="2004" name="Nature">
        <title>The DNA sequence and biology of human chromosome 19.</title>
        <authorList>
            <person name="Grimwood J."/>
            <person name="Gordon L.A."/>
            <person name="Olsen A.S."/>
            <person name="Terry A."/>
            <person name="Schmutz J."/>
            <person name="Lamerdin J.E."/>
            <person name="Hellsten U."/>
            <person name="Goodstein D."/>
            <person name="Couronne O."/>
            <person name="Tran-Gyamfi M."/>
            <person name="Aerts A."/>
            <person name="Altherr M."/>
            <person name="Ashworth L."/>
            <person name="Bajorek E."/>
            <person name="Black S."/>
            <person name="Branscomb E."/>
            <person name="Caenepeel S."/>
            <person name="Carrano A.V."/>
            <person name="Caoile C."/>
            <person name="Chan Y.M."/>
            <person name="Christensen M."/>
            <person name="Cleland C.A."/>
            <person name="Copeland A."/>
            <person name="Dalin E."/>
            <person name="Dehal P."/>
            <person name="Denys M."/>
            <person name="Detter J.C."/>
            <person name="Escobar J."/>
            <person name="Flowers D."/>
            <person name="Fotopulos D."/>
            <person name="Garcia C."/>
            <person name="Georgescu A.M."/>
            <person name="Glavina T."/>
            <person name="Gomez M."/>
            <person name="Gonzales E."/>
            <person name="Groza M."/>
            <person name="Hammon N."/>
            <person name="Hawkins T."/>
            <person name="Haydu L."/>
            <person name="Ho I."/>
            <person name="Huang W."/>
            <person name="Israni S."/>
            <person name="Jett J."/>
            <person name="Kadner K."/>
            <person name="Kimball H."/>
            <person name="Kobayashi A."/>
            <person name="Larionov V."/>
            <person name="Leem S.-H."/>
            <person name="Lopez F."/>
            <person name="Lou Y."/>
            <person name="Lowry S."/>
            <person name="Malfatti S."/>
            <person name="Martinez D."/>
            <person name="McCready P.M."/>
            <person name="Medina C."/>
            <person name="Morgan J."/>
            <person name="Nelson K."/>
            <person name="Nolan M."/>
            <person name="Ovcharenko I."/>
            <person name="Pitluck S."/>
            <person name="Pollard M."/>
            <person name="Popkie A.P."/>
            <person name="Predki P."/>
            <person name="Quan G."/>
            <person name="Ramirez L."/>
            <person name="Rash S."/>
            <person name="Retterer J."/>
            <person name="Rodriguez A."/>
            <person name="Rogers S."/>
            <person name="Salamov A."/>
            <person name="Salazar A."/>
            <person name="She X."/>
            <person name="Smith D."/>
            <person name="Slezak T."/>
            <person name="Solovyev V."/>
            <person name="Thayer N."/>
            <person name="Tice H."/>
            <person name="Tsai M."/>
            <person name="Ustaszewska A."/>
            <person name="Vo N."/>
            <person name="Wagner M."/>
            <person name="Wheeler J."/>
            <person name="Wu K."/>
            <person name="Xie G."/>
            <person name="Yang J."/>
            <person name="Dubchak I."/>
            <person name="Furey T.S."/>
            <person name="DeJong P."/>
            <person name="Dickson M."/>
            <person name="Gordon D."/>
            <person name="Eichler E.E."/>
            <person name="Pennacchio L.A."/>
            <person name="Richardson P."/>
            <person name="Stubbs L."/>
            <person name="Rokhsar D.S."/>
            <person name="Myers R.M."/>
            <person name="Rubin E.M."/>
            <person name="Lucas S.M."/>
        </authorList>
    </citation>
    <scope>NUCLEOTIDE SEQUENCE [LARGE SCALE GENOMIC DNA]</scope>
</reference>
<reference key="3">
    <citation type="submission" date="2005-07" db="EMBL/GenBank/DDBJ databases">
        <authorList>
            <person name="Mural R.J."/>
            <person name="Istrail S."/>
            <person name="Sutton G.G."/>
            <person name="Florea L."/>
            <person name="Halpern A.L."/>
            <person name="Mobarry C.M."/>
            <person name="Lippert R."/>
            <person name="Walenz B."/>
            <person name="Shatkay H."/>
            <person name="Dew I."/>
            <person name="Miller J.R."/>
            <person name="Flanigan M.J."/>
            <person name="Edwards N.J."/>
            <person name="Bolanos R."/>
            <person name="Fasulo D."/>
            <person name="Halldorsson B.V."/>
            <person name="Hannenhalli S."/>
            <person name="Turner R."/>
            <person name="Yooseph S."/>
            <person name="Lu F."/>
            <person name="Nusskern D.R."/>
            <person name="Shue B.C."/>
            <person name="Zheng X.H."/>
            <person name="Zhong F."/>
            <person name="Delcher A.L."/>
            <person name="Huson D.H."/>
            <person name="Kravitz S.A."/>
            <person name="Mouchard L."/>
            <person name="Reinert K."/>
            <person name="Remington K.A."/>
            <person name="Clark A.G."/>
            <person name="Waterman M.S."/>
            <person name="Eichler E.E."/>
            <person name="Adams M.D."/>
            <person name="Hunkapiller M.W."/>
            <person name="Myers E.W."/>
            <person name="Venter J.C."/>
        </authorList>
    </citation>
    <scope>NUCLEOTIDE SEQUENCE [LARGE SCALE GENOMIC DNA]</scope>
</reference>
<reference key="4">
    <citation type="journal article" date="2004" name="Genome Res.">
        <title>The status, quality, and expansion of the NIH full-length cDNA project: the Mammalian Gene Collection (MGC).</title>
        <authorList>
            <consortium name="The MGC Project Team"/>
        </authorList>
    </citation>
    <scope>NUCLEOTIDE SEQUENCE [LARGE SCALE MRNA] (ISOFORM 1)</scope>
    <source>
        <tissue>Placenta</tissue>
    </source>
</reference>
<reference key="5">
    <citation type="journal article" date="2000" name="Genomics">
        <title>The human fatty acid transport protein-1 (SLC27A1; FATP-1) cDNA and gene: organization, chromosomal localization, and expression.</title>
        <authorList>
            <person name="Martin G."/>
            <person name="Nemoto M."/>
            <person name="Gelman L."/>
            <person name="Geffroy S."/>
            <person name="Najib J."/>
            <person name="Fruchart J.-C."/>
            <person name="Roevens P."/>
            <person name="de Martinville B."/>
            <person name="Deeb S."/>
            <person name="Auwerx J."/>
        </authorList>
    </citation>
    <scope>TISSUE SPECIFICITY</scope>
</reference>
<reference key="6">
    <citation type="journal article" date="2003" name="J. Biol. Chem.">
        <title>Characterization of a heart-specific fatty acid transport protein.</title>
        <authorList>
            <person name="Gimeno R.E."/>
            <person name="Ortegon A.M."/>
            <person name="Patel S."/>
            <person name="Punreddy S."/>
            <person name="Ge P."/>
            <person name="Sun Y."/>
            <person name="Lodish H.F."/>
            <person name="Stahl A."/>
        </authorList>
    </citation>
    <scope>FUNCTION</scope>
    <scope>TRANSPORT ACTIVITY</scope>
</reference>
<reference key="7">
    <citation type="journal article" date="2010" name="Am. J. Physiol.">
        <title>FATP2 is a hepatic fatty acid transporter and peroxisomal very long-chain acyl-CoA synthetase.</title>
        <authorList>
            <person name="Falcon A."/>
            <person name="Doege H."/>
            <person name="Fluitt A."/>
            <person name="Tsang B."/>
            <person name="Watson N."/>
            <person name="Kay M.A."/>
            <person name="Stahl A."/>
        </authorList>
    </citation>
    <scope>FUNCTION</scope>
    <scope>TRANSPORT ACTIVITY</scope>
</reference>
<reference key="8">
    <citation type="journal article" date="2011" name="J. Neurochem.">
        <title>Fatty acid transport protein expression in human brain and potential role in fatty acid transport across human brain microvessel endothelial cells.</title>
        <authorList>
            <person name="Mitchell R.W."/>
            <person name="On N.H."/>
            <person name="Del Bigio M.R."/>
            <person name="Miller D.W."/>
            <person name="Hatch G.M."/>
        </authorList>
    </citation>
    <scope>FUNCTION</scope>
    <scope>TRANSPORT ACTIVITY</scope>
    <scope>TISSUE SPECIFICITY</scope>
</reference>
<reference key="9">
    <citation type="journal article" date="2017" name="Nature">
        <title>EPRS is a critical mTORC1-S6K1 effector that influences adiposity in mice.</title>
        <authorList>
            <person name="Arif A."/>
            <person name="Terenzi F."/>
            <person name="Potdar A.A."/>
            <person name="Jia J."/>
            <person name="Sacks J."/>
            <person name="China A."/>
            <person name="Halawani D."/>
            <person name="Vasu K."/>
            <person name="Li X."/>
            <person name="Brown J.M."/>
            <person name="Chen J."/>
            <person name="Kozma S.C."/>
            <person name="Thomas G."/>
            <person name="Fox P.L."/>
        </authorList>
    </citation>
    <scope>FUNCTION</scope>
    <scope>INTERACTION WITH EPRS1</scope>
</reference>
<reference key="10">
    <citation type="journal article" date="2019" name="Cell Rep.">
        <title>The ER-Localized Protein DFCP1 Modulates ER-Lipid Droplet Contact Formation.</title>
        <authorList>
            <person name="Li D."/>
            <person name="Zhao Y.G."/>
            <person name="Li D."/>
            <person name="Zhao H."/>
            <person name="Huang J."/>
            <person name="Miao G."/>
            <person name="Feng D."/>
            <person name="Liu P."/>
            <person name="Li D."/>
            <person name="Zhang H."/>
        </authorList>
    </citation>
    <scope>INTERACTION WITH DGAT2</scope>
</reference>
<accession>Q6PCB7</accession>
<accession>A6NIH2</accession>
<accession>B7Z662</accession>
<keyword id="KW-0025">Alternative splicing</keyword>
<keyword id="KW-1003">Cell membrane</keyword>
<keyword id="KW-0963">Cytoplasm</keyword>
<keyword id="KW-0276">Fatty acid metabolism</keyword>
<keyword id="KW-0436">Ligase</keyword>
<keyword id="KW-0443">Lipid metabolism</keyword>
<keyword id="KW-0445">Lipid transport</keyword>
<keyword id="KW-0472">Membrane</keyword>
<keyword id="KW-0547">Nucleotide-binding</keyword>
<keyword id="KW-1267">Proteomics identification</keyword>
<keyword id="KW-1185">Reference proteome</keyword>
<keyword id="KW-0812">Transmembrane</keyword>
<keyword id="KW-1133">Transmembrane helix</keyword>
<keyword id="KW-0813">Transport</keyword>
<sequence>MRAPGAGAASVVSLALLWLLGLPWTWSAAAALGVYVGSGGWRFLRIVCKTARRDLFGLSVLIRVRLELRRHQRAGHTIPRIFQAVVQRQPERLALVDAGTGECWTFAQLDAYSNAVANLFRQLGFAPGDVVAIFLEGRPEFVGLWLGLAKAGMEAALLNVNLRREPLAFCLGTSGAKALIFGGEMVAAVAEVSGHLGKSLIKFCSGDLGPEGILPDTHLLDPLLKEASTAPLAQIPSKGMDDRLFYIYTSGTTGLPKAAIVVHSRYYRMAAFGHHAYRMQAADVLYDCLPLYHSAGNIIGVGQCLIYGLTVVLRKKFSASRFWDDCIKYNCTVVQYIGEICRYLLKQPVREAERRHRVRLAVGNGLRPAIWEEFTERFGVRQIGEFYGATECNCSIANMDGKVGSCGFNSRILPHVYPIRLVKVNEDTMELLRDAQGLCIPCQAGEPGLLVGQINQQDPLRRFDGYVSESATSKKIAHSVFSKGDSAYLSGDVLVMDELGYMYFRDRSGDTFRWRGENVSTTEVEGVLSRLLGQTDVAVYGVAVPGVEGKAGMAAVADPHSLLDPNAIYQELQKVLAPYARPIFLRLLPQVDTTGTFKIQKTRLQREGFDPRQTSDRLFFLDLKQGHYLPLNEAVYTRICSGAFAL</sequence>
<feature type="chain" id="PRO_0000193201" description="Long-chain fatty acid transport protein 1">
    <location>
        <begin position="1"/>
        <end position="646"/>
    </location>
</feature>
<feature type="topological domain" description="Extracellular" evidence="1">
    <location>
        <begin position="1"/>
        <end position="13"/>
    </location>
</feature>
<feature type="transmembrane region" description="Helical" evidence="2">
    <location>
        <begin position="14"/>
        <end position="34"/>
    </location>
</feature>
<feature type="topological domain" description="Cytoplasmic" evidence="1">
    <location>
        <begin position="35"/>
        <end position="646"/>
    </location>
</feature>
<feature type="region of interest" description="Sufficient for oligomerization" evidence="1">
    <location>
        <begin position="191"/>
        <end position="475"/>
    </location>
</feature>
<feature type="binding site" evidence="1">
    <location>
        <begin position="246"/>
        <end position="257"/>
    </location>
    <ligand>
        <name>AMP</name>
        <dbReference type="ChEBI" id="CHEBI:456215"/>
    </ligand>
</feature>
<feature type="splice variant" id="VSP_055806" description="In isoform 2." evidence="10">
    <original>MRAPGAGA</original>
    <variation>MTHVLGTT</variation>
    <location>
        <begin position="1"/>
        <end position="8"/>
    </location>
</feature>
<feature type="splice variant" id="VSP_055807" description="In isoform 2." evidence="10">
    <location>
        <begin position="9"/>
        <end position="187"/>
    </location>
</feature>